<comment type="function">
    <text evidence="1">F(1)F(0) ATP synthase produces ATP from ADP in the presence of a proton or sodium gradient. F-type ATPases consist of two structural domains, F(1) containing the extramembraneous catalytic core and F(0) containing the membrane proton channel, linked together by a central stalk and a peripheral stalk. During catalysis, ATP synthesis in the catalytic domain of F(1) is coupled via a rotary mechanism of the central stalk subunits to proton translocation.</text>
</comment>
<comment type="function">
    <text evidence="1">Key component of the F(0) channel; it plays a direct role in translocation across the membrane. A homomeric c-ring of between 10-14 subunits forms the central stalk rotor element with the F(1) delta and epsilon subunits.</text>
</comment>
<comment type="subunit">
    <text evidence="1">F-type ATPases have 2 components, F(1) - the catalytic core - and F(0) - the membrane proton channel. F(1) has five subunits: alpha(3), beta(3), gamma(1), delta(1), epsilon(1). F(0) has three main subunits: a(1), b(2) and c(10-14). The alpha and beta chains form an alternating ring which encloses part of the gamma chain. F(1) is attached to F(0) by a central stalk formed by the gamma and epsilon chains, while a peripheral stalk is formed by the delta and b chains.</text>
</comment>
<comment type="subcellular location">
    <subcellularLocation>
        <location evidence="1">Cell membrane</location>
        <topology evidence="1">Multi-pass membrane protein</topology>
    </subcellularLocation>
</comment>
<comment type="similarity">
    <text evidence="1">Belongs to the ATPase C chain family.</text>
</comment>
<protein>
    <recommendedName>
        <fullName evidence="1">ATP synthase subunit c</fullName>
    </recommendedName>
    <alternativeName>
        <fullName evidence="1">ATP synthase F(0) sector subunit c</fullName>
    </alternativeName>
    <alternativeName>
        <fullName evidence="1">F-type ATPase subunit c</fullName>
        <shortName evidence="1">F-ATPase subunit c</shortName>
    </alternativeName>
    <alternativeName>
        <fullName evidence="1">Lipid-binding protein</fullName>
    </alternativeName>
</protein>
<reference key="1">
    <citation type="journal article" date="2004" name="Genome Res.">
        <title>The complete genome and proteome of Mycoplasma mobile.</title>
        <authorList>
            <person name="Jaffe J.D."/>
            <person name="Stange-Thomann N."/>
            <person name="Smith C."/>
            <person name="DeCaprio D."/>
            <person name="Fisher S."/>
            <person name="Butler J."/>
            <person name="Calvo S."/>
            <person name="Elkins T."/>
            <person name="FitzGerald M.G."/>
            <person name="Hafez N."/>
            <person name="Kodira C.D."/>
            <person name="Major J."/>
            <person name="Wang S."/>
            <person name="Wilkinson J."/>
            <person name="Nicol R."/>
            <person name="Nusbaum C."/>
            <person name="Birren B."/>
            <person name="Berg H.C."/>
            <person name="Church G.M."/>
        </authorList>
    </citation>
    <scope>NUCLEOTIDE SEQUENCE [LARGE SCALE GENOMIC DNA]</scope>
    <source>
        <strain>ATCC 43663 / NCTC 11711 / 163 K</strain>
    </source>
</reference>
<sequence length="99" mass="9843">MNDLITNLALPQEVINAAGSNNGAGIGYGLVAVGAGLAMIGALGTGLGQGVSAGKAAEAVGRNPEAEAKIRLMMIIGMGIAETAAIYSLIIAILLIFVY</sequence>
<proteinExistence type="inferred from homology"/>
<gene>
    <name evidence="1" type="primary">atpE</name>
    <name type="ordered locus">MMOB2140</name>
</gene>
<name>ATPL_MYCM1</name>
<accession>Q6KI76</accession>
<evidence type="ECO:0000255" key="1">
    <source>
        <dbReference type="HAMAP-Rule" id="MF_01396"/>
    </source>
</evidence>
<feature type="chain" id="PRO_0000365901" description="ATP synthase subunit c">
    <location>
        <begin position="1"/>
        <end position="99"/>
    </location>
</feature>
<feature type="transmembrane region" description="Helical" evidence="1">
    <location>
        <begin position="23"/>
        <end position="43"/>
    </location>
</feature>
<feature type="transmembrane region" description="Helical" evidence="1">
    <location>
        <begin position="78"/>
        <end position="98"/>
    </location>
</feature>
<feature type="site" description="Reversibly protonated during proton transport" evidence="1">
    <location>
        <position position="82"/>
    </location>
</feature>
<dbReference type="EMBL" id="AE017308">
    <property type="protein sequence ID" value="AAT27700.1"/>
    <property type="molecule type" value="Genomic_DNA"/>
</dbReference>
<dbReference type="RefSeq" id="WP_011264734.1">
    <property type="nucleotide sequence ID" value="NC_006908.1"/>
</dbReference>
<dbReference type="SMR" id="Q6KI76"/>
<dbReference type="STRING" id="267748.MMOB2140"/>
<dbReference type="KEGG" id="mmo:MMOB2140"/>
<dbReference type="eggNOG" id="COG0636">
    <property type="taxonomic scope" value="Bacteria"/>
</dbReference>
<dbReference type="HOGENOM" id="CLU_148047_2_2_14"/>
<dbReference type="OrthoDB" id="9810379at2"/>
<dbReference type="Proteomes" id="UP000009072">
    <property type="component" value="Chromosome"/>
</dbReference>
<dbReference type="GO" id="GO:0005886">
    <property type="term" value="C:plasma membrane"/>
    <property type="evidence" value="ECO:0007669"/>
    <property type="project" value="UniProtKB-SubCell"/>
</dbReference>
<dbReference type="GO" id="GO:0045259">
    <property type="term" value="C:proton-transporting ATP synthase complex"/>
    <property type="evidence" value="ECO:0007669"/>
    <property type="project" value="UniProtKB-KW"/>
</dbReference>
<dbReference type="GO" id="GO:0033177">
    <property type="term" value="C:proton-transporting two-sector ATPase complex, proton-transporting domain"/>
    <property type="evidence" value="ECO:0007669"/>
    <property type="project" value="InterPro"/>
</dbReference>
<dbReference type="GO" id="GO:0008289">
    <property type="term" value="F:lipid binding"/>
    <property type="evidence" value="ECO:0007669"/>
    <property type="project" value="UniProtKB-KW"/>
</dbReference>
<dbReference type="GO" id="GO:0046933">
    <property type="term" value="F:proton-transporting ATP synthase activity, rotational mechanism"/>
    <property type="evidence" value="ECO:0007669"/>
    <property type="project" value="UniProtKB-UniRule"/>
</dbReference>
<dbReference type="CDD" id="cd18184">
    <property type="entry name" value="ATP-synt_Fo_c_NaATPase"/>
    <property type="match status" value="1"/>
</dbReference>
<dbReference type="Gene3D" id="1.20.120.610">
    <property type="entry name" value="lithium bound rotor ring of v- atpase"/>
    <property type="match status" value="1"/>
</dbReference>
<dbReference type="HAMAP" id="MF_01396">
    <property type="entry name" value="ATP_synth_c_bact"/>
    <property type="match status" value="1"/>
</dbReference>
<dbReference type="InterPro" id="IPR005953">
    <property type="entry name" value="ATP_synth_csu_bac/chlpt"/>
</dbReference>
<dbReference type="InterPro" id="IPR000454">
    <property type="entry name" value="ATP_synth_F0_csu"/>
</dbReference>
<dbReference type="InterPro" id="IPR020537">
    <property type="entry name" value="ATP_synth_F0_csu_DDCD_BS"/>
</dbReference>
<dbReference type="InterPro" id="IPR002379">
    <property type="entry name" value="ATPase_proteolipid_c-like_dom"/>
</dbReference>
<dbReference type="InterPro" id="IPR035921">
    <property type="entry name" value="F/V-ATP_Csub_sf"/>
</dbReference>
<dbReference type="NCBIfam" id="TIGR01260">
    <property type="entry name" value="ATP_synt_c"/>
    <property type="match status" value="1"/>
</dbReference>
<dbReference type="Pfam" id="PF00137">
    <property type="entry name" value="ATP-synt_C"/>
    <property type="match status" value="1"/>
</dbReference>
<dbReference type="PRINTS" id="PR00124">
    <property type="entry name" value="ATPASEC"/>
</dbReference>
<dbReference type="SUPFAM" id="SSF81333">
    <property type="entry name" value="F1F0 ATP synthase subunit C"/>
    <property type="match status" value="1"/>
</dbReference>
<dbReference type="PROSITE" id="PS00605">
    <property type="entry name" value="ATPASE_C"/>
    <property type="match status" value="1"/>
</dbReference>
<organism>
    <name type="scientific">Mycoplasma mobile (strain ATCC 43663 / 163K / NCTC 11711)</name>
    <name type="common">Mesomycoplasma mobile</name>
    <dbReference type="NCBI Taxonomy" id="267748"/>
    <lineage>
        <taxon>Bacteria</taxon>
        <taxon>Bacillati</taxon>
        <taxon>Mycoplasmatota</taxon>
        <taxon>Mycoplasmoidales</taxon>
        <taxon>Metamycoplasmataceae</taxon>
        <taxon>Mesomycoplasma</taxon>
    </lineage>
</organism>
<keyword id="KW-0066">ATP synthesis</keyword>
<keyword id="KW-1003">Cell membrane</keyword>
<keyword id="KW-0138">CF(0)</keyword>
<keyword id="KW-0375">Hydrogen ion transport</keyword>
<keyword id="KW-0406">Ion transport</keyword>
<keyword id="KW-0446">Lipid-binding</keyword>
<keyword id="KW-0472">Membrane</keyword>
<keyword id="KW-1185">Reference proteome</keyword>
<keyword id="KW-0812">Transmembrane</keyword>
<keyword id="KW-1133">Transmembrane helix</keyword>
<keyword id="KW-0813">Transport</keyword>